<organism>
    <name type="scientific">Helicobacter pylori (strain G27)</name>
    <dbReference type="NCBI Taxonomy" id="563041"/>
    <lineage>
        <taxon>Bacteria</taxon>
        <taxon>Pseudomonadati</taxon>
        <taxon>Campylobacterota</taxon>
        <taxon>Epsilonproteobacteria</taxon>
        <taxon>Campylobacterales</taxon>
        <taxon>Helicobacteraceae</taxon>
        <taxon>Helicobacter</taxon>
    </lineage>
</organism>
<evidence type="ECO:0000255" key="1">
    <source>
        <dbReference type="HAMAP-Rule" id="MF_00083"/>
    </source>
</evidence>
<protein>
    <recommendedName>
        <fullName evidence="1">Peptidyl-tRNA hydrolase</fullName>
        <shortName evidence="1">Pth</shortName>
        <ecNumber evidence="1">3.1.1.29</ecNumber>
    </recommendedName>
</protein>
<proteinExistence type="inferred from homology"/>
<reference key="1">
    <citation type="journal article" date="2009" name="J. Bacteriol.">
        <title>The complete genome sequence of Helicobacter pylori strain G27.</title>
        <authorList>
            <person name="Baltrus D.A."/>
            <person name="Amieva M.R."/>
            <person name="Covacci A."/>
            <person name="Lowe T.M."/>
            <person name="Merrell D.S."/>
            <person name="Ottemann K.M."/>
            <person name="Stein M."/>
            <person name="Salama N.R."/>
            <person name="Guillemin K."/>
        </authorList>
    </citation>
    <scope>NUCLEOTIDE SEQUENCE [LARGE SCALE GENOMIC DNA]</scope>
    <source>
        <strain>G27</strain>
    </source>
</reference>
<dbReference type="EC" id="3.1.1.29" evidence="1"/>
<dbReference type="EMBL" id="CP001173">
    <property type="protein sequence ID" value="ACI28165.1"/>
    <property type="molecule type" value="Genomic_DNA"/>
</dbReference>
<dbReference type="RefSeq" id="WP_000174014.1">
    <property type="nucleotide sequence ID" value="NC_011333.1"/>
</dbReference>
<dbReference type="SMR" id="B5Z9B6"/>
<dbReference type="KEGG" id="hpg:HPG27_1420"/>
<dbReference type="HOGENOM" id="CLU_062456_4_1_7"/>
<dbReference type="Proteomes" id="UP000001735">
    <property type="component" value="Chromosome"/>
</dbReference>
<dbReference type="GO" id="GO:0005737">
    <property type="term" value="C:cytoplasm"/>
    <property type="evidence" value="ECO:0007669"/>
    <property type="project" value="UniProtKB-SubCell"/>
</dbReference>
<dbReference type="GO" id="GO:0004045">
    <property type="term" value="F:peptidyl-tRNA hydrolase activity"/>
    <property type="evidence" value="ECO:0007669"/>
    <property type="project" value="UniProtKB-UniRule"/>
</dbReference>
<dbReference type="GO" id="GO:0000049">
    <property type="term" value="F:tRNA binding"/>
    <property type="evidence" value="ECO:0007669"/>
    <property type="project" value="UniProtKB-UniRule"/>
</dbReference>
<dbReference type="GO" id="GO:0006515">
    <property type="term" value="P:protein quality control for misfolded or incompletely synthesized proteins"/>
    <property type="evidence" value="ECO:0007669"/>
    <property type="project" value="UniProtKB-UniRule"/>
</dbReference>
<dbReference type="GO" id="GO:0072344">
    <property type="term" value="P:rescue of stalled ribosome"/>
    <property type="evidence" value="ECO:0007669"/>
    <property type="project" value="UniProtKB-UniRule"/>
</dbReference>
<dbReference type="CDD" id="cd00462">
    <property type="entry name" value="PTH"/>
    <property type="match status" value="1"/>
</dbReference>
<dbReference type="FunFam" id="3.40.50.1470:FF:000001">
    <property type="entry name" value="Peptidyl-tRNA hydrolase"/>
    <property type="match status" value="1"/>
</dbReference>
<dbReference type="Gene3D" id="3.40.50.1470">
    <property type="entry name" value="Peptidyl-tRNA hydrolase"/>
    <property type="match status" value="1"/>
</dbReference>
<dbReference type="HAMAP" id="MF_00083">
    <property type="entry name" value="Pept_tRNA_hydro_bact"/>
    <property type="match status" value="1"/>
</dbReference>
<dbReference type="InterPro" id="IPR001328">
    <property type="entry name" value="Pept_tRNA_hydro"/>
</dbReference>
<dbReference type="InterPro" id="IPR018171">
    <property type="entry name" value="Pept_tRNA_hydro_CS"/>
</dbReference>
<dbReference type="InterPro" id="IPR036416">
    <property type="entry name" value="Pept_tRNA_hydro_sf"/>
</dbReference>
<dbReference type="NCBIfam" id="TIGR00447">
    <property type="entry name" value="pth"/>
    <property type="match status" value="1"/>
</dbReference>
<dbReference type="PANTHER" id="PTHR17224">
    <property type="entry name" value="PEPTIDYL-TRNA HYDROLASE"/>
    <property type="match status" value="1"/>
</dbReference>
<dbReference type="PANTHER" id="PTHR17224:SF1">
    <property type="entry name" value="PEPTIDYL-TRNA HYDROLASE"/>
    <property type="match status" value="1"/>
</dbReference>
<dbReference type="Pfam" id="PF01195">
    <property type="entry name" value="Pept_tRNA_hydro"/>
    <property type="match status" value="1"/>
</dbReference>
<dbReference type="SUPFAM" id="SSF53178">
    <property type="entry name" value="Peptidyl-tRNA hydrolase-like"/>
    <property type="match status" value="1"/>
</dbReference>
<dbReference type="PROSITE" id="PS01195">
    <property type="entry name" value="PEPT_TRNA_HYDROL_1"/>
    <property type="match status" value="1"/>
</dbReference>
<dbReference type="PROSITE" id="PS01196">
    <property type="entry name" value="PEPT_TRNA_HYDROL_2"/>
    <property type="match status" value="1"/>
</dbReference>
<feature type="chain" id="PRO_1000092947" description="Peptidyl-tRNA hydrolase">
    <location>
        <begin position="1"/>
        <end position="186"/>
    </location>
</feature>
<feature type="active site" description="Proton acceptor" evidence="1">
    <location>
        <position position="19"/>
    </location>
</feature>
<feature type="binding site" evidence="1">
    <location>
        <position position="14"/>
    </location>
    <ligand>
        <name>tRNA</name>
        <dbReference type="ChEBI" id="CHEBI:17843"/>
    </ligand>
</feature>
<feature type="binding site" evidence="1">
    <location>
        <position position="61"/>
    </location>
    <ligand>
        <name>tRNA</name>
        <dbReference type="ChEBI" id="CHEBI:17843"/>
    </ligand>
</feature>
<feature type="binding site" evidence="1">
    <location>
        <position position="63"/>
    </location>
    <ligand>
        <name>tRNA</name>
        <dbReference type="ChEBI" id="CHEBI:17843"/>
    </ligand>
</feature>
<feature type="binding site" evidence="1">
    <location>
        <position position="107"/>
    </location>
    <ligand>
        <name>tRNA</name>
        <dbReference type="ChEBI" id="CHEBI:17843"/>
    </ligand>
</feature>
<feature type="site" description="Discriminates between blocked and unblocked aminoacyl-tRNA" evidence="1">
    <location>
        <position position="9"/>
    </location>
</feature>
<feature type="site" description="Stabilizes the basic form of H active site to accept a proton" evidence="1">
    <location>
        <position position="86"/>
    </location>
</feature>
<accession>B5Z9B6</accession>
<gene>
    <name evidence="1" type="primary">pth</name>
    <name type="ordered locus">HPG27_1420</name>
</gene>
<comment type="function">
    <text evidence="1">Hydrolyzes ribosome-free peptidyl-tRNAs (with 1 or more amino acids incorporated), which drop off the ribosome during protein synthesis, or as a result of ribosome stalling.</text>
</comment>
<comment type="function">
    <text evidence="1">Catalyzes the release of premature peptidyl moieties from peptidyl-tRNA molecules trapped in stalled 50S ribosomal subunits, and thus maintains levels of free tRNAs and 50S ribosomes.</text>
</comment>
<comment type="catalytic activity">
    <reaction evidence="1">
        <text>an N-acyl-L-alpha-aminoacyl-tRNA + H2O = an N-acyl-L-amino acid + a tRNA + H(+)</text>
        <dbReference type="Rhea" id="RHEA:54448"/>
        <dbReference type="Rhea" id="RHEA-COMP:10123"/>
        <dbReference type="Rhea" id="RHEA-COMP:13883"/>
        <dbReference type="ChEBI" id="CHEBI:15377"/>
        <dbReference type="ChEBI" id="CHEBI:15378"/>
        <dbReference type="ChEBI" id="CHEBI:59874"/>
        <dbReference type="ChEBI" id="CHEBI:78442"/>
        <dbReference type="ChEBI" id="CHEBI:138191"/>
        <dbReference type="EC" id="3.1.1.29"/>
    </reaction>
</comment>
<comment type="subunit">
    <text evidence="1">Monomer.</text>
</comment>
<comment type="subcellular location">
    <subcellularLocation>
        <location evidence="1">Cytoplasm</location>
    </subcellularLocation>
</comment>
<comment type="similarity">
    <text evidence="1">Belongs to the PTH family.</text>
</comment>
<keyword id="KW-0963">Cytoplasm</keyword>
<keyword id="KW-0378">Hydrolase</keyword>
<keyword id="KW-1185">Reference proteome</keyword>
<keyword id="KW-0694">RNA-binding</keyword>
<keyword id="KW-0820">tRNA-binding</keyword>
<sequence length="186" mass="20952">MTLLVGLGNPTLRYAHTRHNAGFDILDSLVSELNLSFAFSPKHNAYLCVYKDFILLKPQTYMNLSGESVLSAKNFYKTKELLIVHDDLDLPLGVVRFKKGGGNGGHNGLKSIDLLCSNSYYRLRVGISKGIGVIEHVLSKFHKNEEPLKNAVFEHAKNALKFFIESHDFNAMQNRFTLKKPLQIES</sequence>
<name>PTH_HELPG</name>